<comment type="function">
    <text evidence="2">Essential for sperm motility and male fertility (By similarity). Plays an important role in sperm motility by regulating the organization and function of the mitochondria and is also required for correct sperm midpiece assembly (By similarity).</text>
</comment>
<comment type="subcellular location">
    <subcellularLocation>
        <location evidence="2">Mitochondrion outer membrane</location>
    </subcellularLocation>
    <subcellularLocation>
        <location evidence="4">Mitochondrion</location>
    </subcellularLocation>
    <subcellularLocation>
        <location evidence="2">Cell projection</location>
        <location evidence="2">Cilium</location>
        <location evidence="2">Flagellum</location>
    </subcellularLocation>
    <text evidence="2">Localizes to the midpiece of the sperm flagellum.</text>
</comment>
<comment type="tissue specificity">
    <text evidence="4">Expressed in the testis.</text>
</comment>
<protein>
    <recommendedName>
        <fullName>Spermatogenesis-associated protein 19, mitochondrial</fullName>
    </recommendedName>
    <alternativeName>
        <fullName>Spermatogenic cell-specific gene 1 protein</fullName>
        <shortName>Spergen-1</shortName>
    </alternativeName>
</protein>
<sequence>MIITTWIMYILARKSIGLPFPPRVNSDIEVEETEAVSVVQHWLNKTEEEASRSIKEKISINDPCTQGHDIHVTRDLVKHRLSKCDMLTDPNQEVLEERTRIQFIRWSHTRIFQVPSEMMDDVIQERIDQVRRSVSHLRCDSSSDPCYRNSCSEC</sequence>
<organism>
    <name type="scientific">Rattus norvegicus</name>
    <name type="common">Rat</name>
    <dbReference type="NCBI Taxonomy" id="10116"/>
    <lineage>
        <taxon>Eukaryota</taxon>
        <taxon>Metazoa</taxon>
        <taxon>Chordata</taxon>
        <taxon>Craniata</taxon>
        <taxon>Vertebrata</taxon>
        <taxon>Euteleostomi</taxon>
        <taxon>Mammalia</taxon>
        <taxon>Eutheria</taxon>
        <taxon>Euarchontoglires</taxon>
        <taxon>Glires</taxon>
        <taxon>Rodentia</taxon>
        <taxon>Myomorpha</taxon>
        <taxon>Muroidea</taxon>
        <taxon>Muridae</taxon>
        <taxon>Murinae</taxon>
        <taxon>Rattus</taxon>
    </lineage>
</organism>
<feature type="transit peptide" description="Mitochondrion" evidence="3">
    <location>
        <begin position="1"/>
        <end position="24"/>
    </location>
</feature>
<feature type="chain" id="PRO_0000251611" description="Spermatogenesis-associated protein 19, mitochondrial" evidence="1">
    <location>
        <begin position="25"/>
        <end position="154"/>
    </location>
</feature>
<feature type="modified residue" description="Phosphoserine" evidence="5">
    <location>
        <position position="26"/>
    </location>
</feature>
<feature type="modified residue" description="Phosphoserine" evidence="5">
    <location>
        <position position="116"/>
    </location>
</feature>
<accession>Q920Q3</accession>
<name>SPT19_RAT</name>
<reference key="1">
    <citation type="journal article" date="2002" name="Biol. Reprod.">
        <title>Complementary DNA cloning and characterization of rat spergen-1, a spermatogenic cell-specific gene-1, containing a mitochondria-targeting signal.</title>
        <authorList>
            <person name="Doiguchi M."/>
            <person name="Yamashita H."/>
            <person name="Ichinose J."/>
            <person name="Mori T."/>
            <person name="Shibata Y."/>
            <person name="Iida H."/>
        </authorList>
    </citation>
    <scope>NUCLEOTIDE SEQUENCE [MRNA]</scope>
    <scope>SUBCELLULAR LOCATION</scope>
    <scope>TISSUE SPECIFICITY</scope>
    <source>
        <strain>Wistar</strain>
        <tissue>Testis</tissue>
    </source>
</reference>
<reference key="2">
    <citation type="journal article" date="2004" name="Genome Res.">
        <title>The status, quality, and expansion of the NIH full-length cDNA project: the Mammalian Gene Collection (MGC).</title>
        <authorList>
            <consortium name="The MGC Project Team"/>
        </authorList>
    </citation>
    <scope>NUCLEOTIDE SEQUENCE [LARGE SCALE MRNA]</scope>
    <source>
        <tissue>Testis</tissue>
    </source>
</reference>
<reference key="3">
    <citation type="journal article" date="2012" name="Nat. Commun.">
        <title>Quantitative maps of protein phosphorylation sites across 14 different rat organs and tissues.</title>
        <authorList>
            <person name="Lundby A."/>
            <person name="Secher A."/>
            <person name="Lage K."/>
            <person name="Nordsborg N.B."/>
            <person name="Dmytriyev A."/>
            <person name="Lundby C."/>
            <person name="Olsen J.V."/>
        </authorList>
    </citation>
    <scope>PHOSPHORYLATION [LARGE SCALE ANALYSIS] AT SER-26 AND SER-116</scope>
    <scope>IDENTIFICATION BY MASS SPECTROMETRY [LARGE SCALE ANALYSIS]</scope>
</reference>
<evidence type="ECO:0000250" key="1"/>
<evidence type="ECO:0000250" key="2">
    <source>
        <dbReference type="UniProtKB" id="Q9DAQ9"/>
    </source>
</evidence>
<evidence type="ECO:0000255" key="3"/>
<evidence type="ECO:0000269" key="4">
    <source>
    </source>
</evidence>
<evidence type="ECO:0007744" key="5">
    <source>
    </source>
</evidence>
<keyword id="KW-0966">Cell projection</keyword>
<keyword id="KW-0969">Cilium</keyword>
<keyword id="KW-0217">Developmental protein</keyword>
<keyword id="KW-0221">Differentiation</keyword>
<keyword id="KW-0282">Flagellum</keyword>
<keyword id="KW-0472">Membrane</keyword>
<keyword id="KW-0496">Mitochondrion</keyword>
<keyword id="KW-1000">Mitochondrion outer membrane</keyword>
<keyword id="KW-0597">Phosphoprotein</keyword>
<keyword id="KW-1185">Reference proteome</keyword>
<keyword id="KW-0744">Spermatogenesis</keyword>
<keyword id="KW-0809">Transit peptide</keyword>
<proteinExistence type="evidence at protein level"/>
<gene>
    <name type="primary">Spata19</name>
    <name type="synonym">Spas1</name>
    <name type="synonym">Spergen1</name>
</gene>
<dbReference type="EMBL" id="AB057408">
    <property type="protein sequence ID" value="BAB69061.1"/>
    <property type="molecule type" value="mRNA"/>
</dbReference>
<dbReference type="EMBL" id="BC081729">
    <property type="protein sequence ID" value="AAH81729.1"/>
    <property type="molecule type" value="mRNA"/>
</dbReference>
<dbReference type="RefSeq" id="NP_599211.1">
    <property type="nucleotide sequence ID" value="NM_134384.1"/>
</dbReference>
<dbReference type="RefSeq" id="XP_063120908.1">
    <property type="nucleotide sequence ID" value="XM_063264838.1"/>
</dbReference>
<dbReference type="SMR" id="Q920Q3"/>
<dbReference type="STRING" id="10116.ENSRNOP00000040918"/>
<dbReference type="iPTMnet" id="Q920Q3"/>
<dbReference type="PhosphoSitePlus" id="Q920Q3"/>
<dbReference type="PaxDb" id="10116-ENSRNOP00000040918"/>
<dbReference type="Ensembl" id="ENSRNOT00000051573.5">
    <property type="protein sequence ID" value="ENSRNOP00000040918.5"/>
    <property type="gene ID" value="ENSRNOG00000031438.5"/>
</dbReference>
<dbReference type="GeneID" id="171403"/>
<dbReference type="KEGG" id="rno:171403"/>
<dbReference type="AGR" id="RGD:620628"/>
<dbReference type="CTD" id="219938"/>
<dbReference type="RGD" id="620628">
    <property type="gene designation" value="Spata19"/>
</dbReference>
<dbReference type="GeneTree" id="ENSGT00390000002749"/>
<dbReference type="InParanoid" id="Q920Q3"/>
<dbReference type="OMA" id="EHWLKKT"/>
<dbReference type="OrthoDB" id="9012529at2759"/>
<dbReference type="PhylomeDB" id="Q920Q3"/>
<dbReference type="PRO" id="PR:Q920Q3"/>
<dbReference type="Proteomes" id="UP000002494">
    <property type="component" value="Chromosome 8"/>
</dbReference>
<dbReference type="GO" id="GO:0005741">
    <property type="term" value="C:mitochondrial outer membrane"/>
    <property type="evidence" value="ECO:0000250"/>
    <property type="project" value="UniProtKB"/>
</dbReference>
<dbReference type="GO" id="GO:0005739">
    <property type="term" value="C:mitochondrion"/>
    <property type="evidence" value="ECO:0000314"/>
    <property type="project" value="UniProtKB"/>
</dbReference>
<dbReference type="GO" id="GO:0036126">
    <property type="term" value="C:sperm flagellum"/>
    <property type="evidence" value="ECO:0000250"/>
    <property type="project" value="UniProtKB"/>
</dbReference>
<dbReference type="GO" id="GO:0097225">
    <property type="term" value="C:sperm midpiece"/>
    <property type="evidence" value="ECO:0000250"/>
    <property type="project" value="UniProtKB"/>
</dbReference>
<dbReference type="GO" id="GO:0030154">
    <property type="term" value="P:cell differentiation"/>
    <property type="evidence" value="ECO:0007669"/>
    <property type="project" value="UniProtKB-KW"/>
</dbReference>
<dbReference type="GO" id="GO:0030382">
    <property type="term" value="P:sperm mitochondrion organization"/>
    <property type="evidence" value="ECO:0000250"/>
    <property type="project" value="UniProtKB"/>
</dbReference>
<dbReference type="GO" id="GO:0007283">
    <property type="term" value="P:spermatogenesis"/>
    <property type="evidence" value="ECO:0007669"/>
    <property type="project" value="UniProtKB-KW"/>
</dbReference>
<dbReference type="InterPro" id="IPR028219">
    <property type="entry name" value="SPATA19"/>
</dbReference>
<dbReference type="PANTHER" id="PTHR36468">
    <property type="entry name" value="SPERMATOGENESIS-ASSOCIATED PROTEIN 19, MITOCHONDRIAL"/>
    <property type="match status" value="1"/>
</dbReference>
<dbReference type="PANTHER" id="PTHR36468:SF1">
    <property type="entry name" value="SPERMATOGENESIS-ASSOCIATED PROTEIN 19, MITOCHONDRIAL"/>
    <property type="match status" value="1"/>
</dbReference>
<dbReference type="Pfam" id="PF15212">
    <property type="entry name" value="SPATA19"/>
    <property type="match status" value="1"/>
</dbReference>